<protein>
    <recommendedName>
        <fullName>Tax1-binding protein 3</fullName>
    </recommendedName>
    <alternativeName>
        <fullName>Glutaminase-interacting protein 3</fullName>
    </alternativeName>
    <alternativeName>
        <fullName>Tax interaction protein 1</fullName>
        <shortName>TIP-1</shortName>
    </alternativeName>
    <alternativeName>
        <fullName>Tax-interacting protein 1</fullName>
    </alternativeName>
</protein>
<reference evidence="12 13" key="1">
    <citation type="journal article" date="1998" name="Oncogene">
        <title>The C-terminus of the HTLV-1 Tax oncoprotein mediates interaction with the PDZ domain of cellular proteins.</title>
        <authorList>
            <person name="Rousset R."/>
            <person name="Fabre S."/>
            <person name="Desbois C."/>
            <person name="Bantignies F."/>
            <person name="Jalinot P."/>
        </authorList>
    </citation>
    <scope>NUCLEOTIDE SEQUENCE [MRNA]</scope>
    <scope>INTERACTION WITH HTLV-1 TAX</scope>
    <source>
        <tissue evidence="13">Peripheral blood lymphocyte</tissue>
    </source>
</reference>
<reference evidence="14" key="2">
    <citation type="journal article" date="2000" name="Genome Res.">
        <title>The genomic region encompassing the nephropathic cystinosis gene (CTNS): complete sequencing of a 200-kb segment and discovery of a novel gene within the common cystinosis-causing deletion.</title>
        <authorList>
            <person name="Touchman J.W."/>
            <person name="Anikster Y."/>
            <person name="Dietrich N.L."/>
            <person name="Maduro V.V.B."/>
            <person name="McDowell G."/>
            <person name="Shotelersuk V."/>
            <person name="Bouffard G.G."/>
            <person name="Beckstrom-Sternberg S.M."/>
            <person name="Gahl W.A."/>
            <person name="Green E.D."/>
        </authorList>
    </citation>
    <scope>NUCLEOTIDE SEQUENCE [GENOMIC DNA]</scope>
</reference>
<reference evidence="12 15" key="3">
    <citation type="journal article" date="2001" name="FEBS Lett.">
        <title>The C-terminus of human glutaminase L mediates association with PDZ domain-containing proteins.</title>
        <authorList>
            <person name="Olalla L."/>
            <person name="Aledo J.C."/>
            <person name="Bannenberg G."/>
            <person name="Marquez J."/>
        </authorList>
    </citation>
    <scope>NUCLEOTIDE SEQUENCE [MRNA]</scope>
    <scope>INTERACTION WITH GLS2</scope>
    <source>
        <tissue evidence="15">Brain</tissue>
    </source>
</reference>
<reference evidence="17" key="4">
    <citation type="submission" date="2000-06" db="EMBL/GenBank/DDBJ databases">
        <title>hPWP1-interacting proteins 2 and 11 (Tax-interacting protein 1).</title>
        <authorList>
            <person name="Honore B."/>
        </authorList>
    </citation>
    <scope>NUCLEOTIDE SEQUENCE [MRNA]</scope>
    <source>
        <tissue evidence="17">Ovary</tissue>
    </source>
</reference>
<reference key="5">
    <citation type="journal article" date="2004" name="Nat. Genet.">
        <title>Complete sequencing and characterization of 21,243 full-length human cDNAs.</title>
        <authorList>
            <person name="Ota T."/>
            <person name="Suzuki Y."/>
            <person name="Nishikawa T."/>
            <person name="Otsuki T."/>
            <person name="Sugiyama T."/>
            <person name="Irie R."/>
            <person name="Wakamatsu A."/>
            <person name="Hayashi K."/>
            <person name="Sato H."/>
            <person name="Nagai K."/>
            <person name="Kimura K."/>
            <person name="Makita H."/>
            <person name="Sekine M."/>
            <person name="Obayashi M."/>
            <person name="Nishi T."/>
            <person name="Shibahara T."/>
            <person name="Tanaka T."/>
            <person name="Ishii S."/>
            <person name="Yamamoto J."/>
            <person name="Saito K."/>
            <person name="Kawai Y."/>
            <person name="Isono Y."/>
            <person name="Nakamura Y."/>
            <person name="Nagahari K."/>
            <person name="Murakami K."/>
            <person name="Yasuda T."/>
            <person name="Iwayanagi T."/>
            <person name="Wagatsuma M."/>
            <person name="Shiratori A."/>
            <person name="Sudo H."/>
            <person name="Hosoiri T."/>
            <person name="Kaku Y."/>
            <person name="Kodaira H."/>
            <person name="Kondo H."/>
            <person name="Sugawara M."/>
            <person name="Takahashi M."/>
            <person name="Kanda K."/>
            <person name="Yokoi T."/>
            <person name="Furuya T."/>
            <person name="Kikkawa E."/>
            <person name="Omura Y."/>
            <person name="Abe K."/>
            <person name="Kamihara K."/>
            <person name="Katsuta N."/>
            <person name="Sato K."/>
            <person name="Tanikawa M."/>
            <person name="Yamazaki M."/>
            <person name="Ninomiya K."/>
            <person name="Ishibashi T."/>
            <person name="Yamashita H."/>
            <person name="Murakawa K."/>
            <person name="Fujimori K."/>
            <person name="Tanai H."/>
            <person name="Kimata M."/>
            <person name="Watanabe M."/>
            <person name="Hiraoka S."/>
            <person name="Chiba Y."/>
            <person name="Ishida S."/>
            <person name="Ono Y."/>
            <person name="Takiguchi S."/>
            <person name="Watanabe S."/>
            <person name="Yosida M."/>
            <person name="Hotuta T."/>
            <person name="Kusano J."/>
            <person name="Kanehori K."/>
            <person name="Takahashi-Fujii A."/>
            <person name="Hara H."/>
            <person name="Tanase T.-O."/>
            <person name="Nomura Y."/>
            <person name="Togiya S."/>
            <person name="Komai F."/>
            <person name="Hara R."/>
            <person name="Takeuchi K."/>
            <person name="Arita M."/>
            <person name="Imose N."/>
            <person name="Musashino K."/>
            <person name="Yuuki H."/>
            <person name="Oshima A."/>
            <person name="Sasaki N."/>
            <person name="Aotsuka S."/>
            <person name="Yoshikawa Y."/>
            <person name="Matsunawa H."/>
            <person name="Ichihara T."/>
            <person name="Shiohata N."/>
            <person name="Sano S."/>
            <person name="Moriya S."/>
            <person name="Momiyama H."/>
            <person name="Satoh N."/>
            <person name="Takami S."/>
            <person name="Terashima Y."/>
            <person name="Suzuki O."/>
            <person name="Nakagawa S."/>
            <person name="Senoh A."/>
            <person name="Mizoguchi H."/>
            <person name="Goto Y."/>
            <person name="Shimizu F."/>
            <person name="Wakebe H."/>
            <person name="Hishigaki H."/>
            <person name="Watanabe T."/>
            <person name="Sugiyama A."/>
            <person name="Takemoto M."/>
            <person name="Kawakami B."/>
            <person name="Yamazaki M."/>
            <person name="Watanabe K."/>
            <person name="Kumagai A."/>
            <person name="Itakura S."/>
            <person name="Fukuzumi Y."/>
            <person name="Fujimori Y."/>
            <person name="Komiyama M."/>
            <person name="Tashiro H."/>
            <person name="Tanigami A."/>
            <person name="Fujiwara T."/>
            <person name="Ono T."/>
            <person name="Yamada K."/>
            <person name="Fujii Y."/>
            <person name="Ozaki K."/>
            <person name="Hirao M."/>
            <person name="Ohmori Y."/>
            <person name="Kawabata A."/>
            <person name="Hikiji T."/>
            <person name="Kobatake N."/>
            <person name="Inagaki H."/>
            <person name="Ikema Y."/>
            <person name="Okamoto S."/>
            <person name="Okitani R."/>
            <person name="Kawakami T."/>
            <person name="Noguchi S."/>
            <person name="Itoh T."/>
            <person name="Shigeta K."/>
            <person name="Senba T."/>
            <person name="Matsumura K."/>
            <person name="Nakajima Y."/>
            <person name="Mizuno T."/>
            <person name="Morinaga M."/>
            <person name="Sasaki M."/>
            <person name="Togashi T."/>
            <person name="Oyama M."/>
            <person name="Hata H."/>
            <person name="Watanabe M."/>
            <person name="Komatsu T."/>
            <person name="Mizushima-Sugano J."/>
            <person name="Satoh T."/>
            <person name="Shirai Y."/>
            <person name="Takahashi Y."/>
            <person name="Nakagawa K."/>
            <person name="Okumura K."/>
            <person name="Nagase T."/>
            <person name="Nomura N."/>
            <person name="Kikuchi H."/>
            <person name="Masuho Y."/>
            <person name="Yamashita R."/>
            <person name="Nakai K."/>
            <person name="Yada T."/>
            <person name="Nakamura Y."/>
            <person name="Ohara O."/>
            <person name="Isogai T."/>
            <person name="Sugano S."/>
        </authorList>
    </citation>
    <scope>NUCLEOTIDE SEQUENCE [LARGE SCALE MRNA]</scope>
    <source>
        <tissue>Tongue</tissue>
    </source>
</reference>
<reference evidence="17" key="6">
    <citation type="submission" date="2005-09" db="EMBL/GenBank/DDBJ databases">
        <authorList>
            <person name="Mural R.J."/>
            <person name="Istrail S."/>
            <person name="Sutton G.G."/>
            <person name="Florea L."/>
            <person name="Halpern A.L."/>
            <person name="Mobarry C.M."/>
            <person name="Lippert R."/>
            <person name="Walenz B."/>
            <person name="Shatkay H."/>
            <person name="Dew I."/>
            <person name="Miller J.R."/>
            <person name="Flanigan M.J."/>
            <person name="Edwards N.J."/>
            <person name="Bolanos R."/>
            <person name="Fasulo D."/>
            <person name="Halldorsson B.V."/>
            <person name="Hannenhalli S."/>
            <person name="Turner R."/>
            <person name="Yooseph S."/>
            <person name="Lu F."/>
            <person name="Nusskern D.R."/>
            <person name="Shue B.C."/>
            <person name="Zheng X.H."/>
            <person name="Zhong F."/>
            <person name="Delcher A.L."/>
            <person name="Huson D.H."/>
            <person name="Kravitz S.A."/>
            <person name="Mouchard L."/>
            <person name="Reinert K."/>
            <person name="Remington K.A."/>
            <person name="Clark A.G."/>
            <person name="Waterman M.S."/>
            <person name="Eichler E.E."/>
            <person name="Adams M.D."/>
            <person name="Hunkapiller M.W."/>
            <person name="Myers E.W."/>
            <person name="Venter J.C."/>
        </authorList>
    </citation>
    <scope>NUCLEOTIDE SEQUENCE [LARGE SCALE GENOMIC DNA]</scope>
</reference>
<reference evidence="16" key="7">
    <citation type="journal article" date="2004" name="Genome Res.">
        <title>The status, quality, and expansion of the NIH full-length cDNA project: the Mammalian Gene Collection (MGC).</title>
        <authorList>
            <consortium name="The MGC Project Team"/>
        </authorList>
    </citation>
    <scope>NUCLEOTIDE SEQUENCE [LARGE SCALE MRNA]</scope>
    <source>
        <tissue evidence="16">Kidney</tissue>
    </source>
</reference>
<reference evidence="12" key="8">
    <citation type="journal article" date="2000" name="J. Biol. Chem.">
        <title>The PDZ protein TIP-1 interacts with the Rho effector rhotekin and is involved in Rho signaling to the serum response element.</title>
        <authorList>
            <person name="Reynaud C."/>
            <person name="Fabre S."/>
            <person name="Jalinot P."/>
        </authorList>
    </citation>
    <scope>FUNCTION</scope>
    <scope>INTERACTION WITH RTKN</scope>
    <scope>SUBCELLULAR LOCATION</scope>
    <scope>TISSUE SPECIFICITY</scope>
</reference>
<reference key="9">
    <citation type="journal article" date="2006" name="Mol. Biol. Cell">
        <title>TIP-1 has PDZ scaffold antagonist activity.</title>
        <authorList>
            <person name="Alewine C."/>
            <person name="Olsen O."/>
            <person name="Wade J.B."/>
            <person name="Welling P.A."/>
        </authorList>
    </citation>
    <scope>FUNCTION</scope>
    <scope>INTERACTION WITH KCNJ4</scope>
    <scope>MUTAGENESIS OF LYS-20 AND HIS-90</scope>
    <scope>SUBCELLULAR LOCATION</scope>
    <scope>TISSUE SPECIFICITY</scope>
</reference>
<reference key="10">
    <citation type="journal article" date="2008" name="Proc. Natl. Acad. Sci. U.S.A.">
        <title>A quantitative atlas of mitotic phosphorylation.</title>
        <authorList>
            <person name="Dephoure N."/>
            <person name="Zhou C."/>
            <person name="Villen J."/>
            <person name="Beausoleil S.A."/>
            <person name="Bakalarski C.E."/>
            <person name="Elledge S.J."/>
            <person name="Gygi S.P."/>
        </authorList>
    </citation>
    <scope>IDENTIFICATION BY MASS SPECTROMETRY [LARGE SCALE ANALYSIS]</scope>
    <source>
        <tissue>Cervix carcinoma</tissue>
    </source>
</reference>
<reference key="11">
    <citation type="journal article" date="2010" name="Sci. Signal.">
        <title>Quantitative phosphoproteomics reveals widespread full phosphorylation site occupancy during mitosis.</title>
        <authorList>
            <person name="Olsen J.V."/>
            <person name="Vermeulen M."/>
            <person name="Santamaria A."/>
            <person name="Kumar C."/>
            <person name="Miller M.L."/>
            <person name="Jensen L.J."/>
            <person name="Gnad F."/>
            <person name="Cox J."/>
            <person name="Jensen T.S."/>
            <person name="Nigg E.A."/>
            <person name="Brunak S."/>
            <person name="Mann M."/>
        </authorList>
    </citation>
    <scope>PHOSPHORYLATION [LARGE SCALE ANALYSIS] AT SER-61</scope>
    <scope>IDENTIFICATION BY MASS SPECTROMETRY [LARGE SCALE ANALYSIS]</scope>
    <source>
        <tissue>Cervix carcinoma</tissue>
    </source>
</reference>
<reference key="12">
    <citation type="journal article" date="2011" name="BMC Syst. Biol.">
        <title>Initial characterization of the human central proteome.</title>
        <authorList>
            <person name="Burkard T.R."/>
            <person name="Planyavsky M."/>
            <person name="Kaupe I."/>
            <person name="Breitwieser F.P."/>
            <person name="Buerckstuemmer T."/>
            <person name="Bennett K.L."/>
            <person name="Superti-Furga G."/>
            <person name="Colinge J."/>
        </authorList>
    </citation>
    <scope>IDENTIFICATION BY MASS SPECTROMETRY [LARGE SCALE ANALYSIS]</scope>
</reference>
<reference key="13">
    <citation type="journal article" date="2011" name="Br. J. Cancer">
        <title>The HPV16 E6 binding protein Tip-1 interacts with ARHGEF16, which activates Cdc42.</title>
        <authorList>
            <person name="Oliver A.W."/>
            <person name="He X."/>
            <person name="Borthwick K."/>
            <person name="Donne A.J."/>
            <person name="Hampson L."/>
            <person name="Hampson I.N."/>
        </authorList>
    </citation>
    <scope>FUNCTION</scope>
    <scope>INTERACTION WITH ARHGEF16</scope>
</reference>
<reference key="14">
    <citation type="journal article" date="2012" name="Mol. Cell. Proteomics">
        <title>Comparative large-scale characterisation of plant vs. mammal proteins reveals similar and idiosyncratic N-alpha acetylation features.</title>
        <authorList>
            <person name="Bienvenut W.V."/>
            <person name="Sumpton D."/>
            <person name="Martinez A."/>
            <person name="Lilla S."/>
            <person name="Espagne C."/>
            <person name="Meinnel T."/>
            <person name="Giglione C."/>
        </authorList>
    </citation>
    <scope>ACETYLATION [LARGE SCALE ANALYSIS] AT SER-2</scope>
    <scope>CLEAVAGE OF INITIATOR METHIONINE [LARGE SCALE ANALYSIS]</scope>
    <scope>IDENTIFICATION BY MASS SPECTROMETRY [LARGE SCALE ANALYSIS]</scope>
</reference>
<reference key="15">
    <citation type="journal article" date="2012" name="Proc. Natl. Acad. Sci. U.S.A.">
        <title>N-terminal acetylome analyses and functional insights of the N-terminal acetyltransferase NatB.</title>
        <authorList>
            <person name="Van Damme P."/>
            <person name="Lasa M."/>
            <person name="Polevoda B."/>
            <person name="Gazquez C."/>
            <person name="Elosegui-Artola A."/>
            <person name="Kim D.S."/>
            <person name="De Juan-Pardo E."/>
            <person name="Demeyer K."/>
            <person name="Hole K."/>
            <person name="Larrea E."/>
            <person name="Timmerman E."/>
            <person name="Prieto J."/>
            <person name="Arnesen T."/>
            <person name="Sherman F."/>
            <person name="Gevaert K."/>
            <person name="Aldabe R."/>
        </authorList>
    </citation>
    <scope>ACETYLATION [LARGE SCALE ANALYSIS] AT SER-2</scope>
    <scope>CLEAVAGE OF INITIATOR METHIONINE [LARGE SCALE ANALYSIS]</scope>
    <scope>IDENTIFICATION BY MASS SPECTROMETRY [LARGE SCALE ANALYSIS]</scope>
</reference>
<reference key="16">
    <citation type="journal article" date="2013" name="J. Proteome Res.">
        <title>Toward a comprehensive characterization of a human cancer cell phosphoproteome.</title>
        <authorList>
            <person name="Zhou H."/>
            <person name="Di Palma S."/>
            <person name="Preisinger C."/>
            <person name="Peng M."/>
            <person name="Polat A.N."/>
            <person name="Heck A.J."/>
            <person name="Mohammed S."/>
        </authorList>
    </citation>
    <scope>PHOSPHORYLATION [LARGE SCALE ANALYSIS] AT SER-61</scope>
    <scope>IDENTIFICATION BY MASS SPECTROMETRY [LARGE SCALE ANALYSIS]</scope>
    <source>
        <tissue>Cervix carcinoma</tissue>
    </source>
</reference>
<reference key="17">
    <citation type="journal article" date="2009" name="J. Biomol. NMR">
        <title>Solution structure of the human Tax-interacting protein-1.</title>
        <authorList>
            <person name="Durney M.A."/>
            <person name="Birrane G."/>
            <person name="Anklin C."/>
            <person name="Soni A."/>
            <person name="Ladias J.A."/>
        </authorList>
    </citation>
    <scope>STRUCTURE BY NMR</scope>
    <scope>INTERACTION WITH KCNJ4</scope>
</reference>
<reference key="18">
    <citation type="journal article" date="2009" name="J. Mol. Biol.">
        <title>Molecular mechanism of inward rectifier potassium channel 2.3 regulation by tax-interacting protein-1.</title>
        <authorList>
            <person name="Yan X."/>
            <person name="Zhou H."/>
            <person name="Zhang J."/>
            <person name="Shi C."/>
            <person name="Xie X."/>
            <person name="Wu Y."/>
            <person name="Tian C."/>
            <person name="Shen Y."/>
            <person name="Long J."/>
        </authorList>
    </citation>
    <scope>X-RAY CRYSTALLOGRAPHY (2.80 ANGSTROMS)</scope>
    <scope>INTERACTION WITH KCNJ4</scope>
</reference>
<reference evidence="17" key="19">
    <citation type="submission" date="2009-02" db="PDB data bank">
        <title>The structure of the PDZ domain of TAX1BP.</title>
        <authorList>
            <consortium name="Structural genomics consortium (SGC)"/>
        </authorList>
    </citation>
    <scope>X-RAY CRYSTALLOGRAPHY (1.74 ANGSTROMS) OF 13-124</scope>
</reference>
<reference key="20">
    <citation type="journal article" date="2011" name="Biochemistry">
        <title>Promiscuous binding at the crossroads of numerous cancer pathways: insight from the binding of glutaminase interacting protein with glutaminase L.</title>
        <authorList>
            <person name="Zoetewey D.L."/>
            <person name="Ovee M."/>
            <person name="Banerjee M."/>
            <person name="Bhaskaran R."/>
            <person name="Mohanty S."/>
        </authorList>
    </citation>
    <scope>STRUCTURE BY NMR IN COMPLEX WITH GLS2</scope>
    <scope>INTERACTION WITH GLS2</scope>
</reference>
<reference key="21">
    <citation type="journal article" date="2011" name="Biochem. Biophys. Res. Commun.">
        <title>Identification of brain-specific angiogenesis inhibitor 2 as an interaction partner of glutaminase interacting protein.</title>
        <authorList>
            <person name="Zencir S."/>
            <person name="Ovee M."/>
            <person name="Dobson M.J."/>
            <person name="Banerjee M."/>
            <person name="Topcu Z."/>
            <person name="Mohanty S."/>
        </authorList>
    </citation>
    <scope>STRUCTURE BY NMR IN COMPLEX WITH ADGRB2</scope>
    <scope>INTERACTION WITH ADGRB2</scope>
</reference>
<reference key="22">
    <citation type="journal article" date="2015" name="Hum. Mutat.">
        <title>Mutations in TAX1BP3 cause dilated cardiomyopathy with septo-optic dysplasia.</title>
        <authorList>
            <person name="Reinstein E."/>
            <person name="Orvin K."/>
            <person name="Tayeb-Fligelman E."/>
            <person name="Stiebel-Kalish H."/>
            <person name="Tzur S."/>
            <person name="Pimienta A.L."/>
            <person name="Bazak L."/>
            <person name="Bengal T."/>
            <person name="Cohen L."/>
            <person name="Gaton D.D."/>
            <person name="Bormans C."/>
            <person name="Landau M."/>
            <person name="Kornowski R."/>
            <person name="Shohat M."/>
            <person name="Behar D.M."/>
        </authorList>
    </citation>
    <scope>VARIANT THR-33</scope>
    <scope>TISSUE SPECIFICITY</scope>
</reference>
<feature type="initiator methionine" description="Removed" evidence="20 21">
    <location>
        <position position="1"/>
    </location>
</feature>
<feature type="chain" id="PRO_0000233943" description="Tax1-binding protein 3">
    <location>
        <begin position="2"/>
        <end position="124"/>
    </location>
</feature>
<feature type="domain" description="PDZ" evidence="1">
    <location>
        <begin position="15"/>
        <end position="112"/>
    </location>
</feature>
<feature type="modified residue" description="N-acetylserine" evidence="20 21">
    <location>
        <position position="2"/>
    </location>
</feature>
<feature type="modified residue" description="Phosphoserine" evidence="19 22">
    <location>
        <position position="61"/>
    </location>
</feature>
<feature type="sequence variant" id="VAR_073966" description="Found in a patient with dilated cardiomyopathy and septo-optic dysplasia; uncertain significance; dbSNP:rs1057517690." evidence="10">
    <original>I</original>
    <variation>T</variation>
    <location>
        <position position="33"/>
    </location>
</feature>
<feature type="mutagenesis site" description="Abolishes interaction with KCNJ4." evidence="4">
    <original>K</original>
    <variation>A</variation>
    <location>
        <position position="20"/>
    </location>
</feature>
<feature type="mutagenesis site" description="Abolishes interaction with KCNJ4." evidence="4">
    <original>H</original>
    <variation>A</variation>
    <location>
        <position position="90"/>
    </location>
</feature>
<feature type="strand" evidence="23">
    <location>
        <begin position="9"/>
        <end position="11"/>
    </location>
</feature>
<feature type="strand" evidence="26">
    <location>
        <begin position="12"/>
        <end position="19"/>
    </location>
</feature>
<feature type="strand" evidence="26">
    <location>
        <begin position="21"/>
        <end position="23"/>
    </location>
</feature>
<feature type="strand" evidence="26">
    <location>
        <begin position="26"/>
        <end position="28"/>
    </location>
</feature>
<feature type="strand" evidence="26">
    <location>
        <begin position="30"/>
        <end position="35"/>
    </location>
</feature>
<feature type="strand" evidence="24">
    <location>
        <begin position="37"/>
        <end position="39"/>
    </location>
</feature>
<feature type="helix" evidence="26">
    <location>
        <begin position="41"/>
        <end position="43"/>
    </location>
</feature>
<feature type="turn" evidence="23">
    <location>
        <begin position="45"/>
        <end position="47"/>
    </location>
</feature>
<feature type="strand" evidence="24">
    <location>
        <begin position="48"/>
        <end position="50"/>
    </location>
</feature>
<feature type="strand" evidence="26">
    <location>
        <begin position="54"/>
        <end position="60"/>
    </location>
</feature>
<feature type="strand" evidence="23">
    <location>
        <begin position="62"/>
        <end position="64"/>
    </location>
</feature>
<feature type="helix" evidence="26">
    <location>
        <begin position="65"/>
        <end position="69"/>
    </location>
</feature>
<feature type="strand" evidence="26">
    <location>
        <begin position="76"/>
        <end position="80"/>
    </location>
</feature>
<feature type="strand" evidence="25">
    <location>
        <begin position="83"/>
        <end position="85"/>
    </location>
</feature>
<feature type="helix" evidence="26">
    <location>
        <begin position="90"/>
        <end position="97"/>
    </location>
</feature>
<feature type="strand" evidence="25">
    <location>
        <begin position="98"/>
        <end position="101"/>
    </location>
</feature>
<feature type="strand" evidence="26">
    <location>
        <begin position="103"/>
        <end position="111"/>
    </location>
</feature>
<feature type="strand" evidence="23">
    <location>
        <begin position="115"/>
        <end position="118"/>
    </location>
</feature>
<feature type="turn" evidence="23">
    <location>
        <begin position="121"/>
        <end position="123"/>
    </location>
</feature>
<organism>
    <name type="scientific">Homo sapiens</name>
    <name type="common">Human</name>
    <dbReference type="NCBI Taxonomy" id="9606"/>
    <lineage>
        <taxon>Eukaryota</taxon>
        <taxon>Metazoa</taxon>
        <taxon>Chordata</taxon>
        <taxon>Craniata</taxon>
        <taxon>Vertebrata</taxon>
        <taxon>Euteleostomi</taxon>
        <taxon>Mammalia</taxon>
        <taxon>Eutheria</taxon>
        <taxon>Euarchontoglires</taxon>
        <taxon>Primates</taxon>
        <taxon>Haplorrhini</taxon>
        <taxon>Catarrhini</taxon>
        <taxon>Hominidae</taxon>
        <taxon>Homo</taxon>
    </lineage>
</organism>
<gene>
    <name evidence="18" type="primary">TAX1BP3</name>
    <name evidence="14" type="synonym">TIP1</name>
</gene>
<comment type="function">
    <text evidence="2 4 7">May regulate a number of protein-protein interactions by competing for PDZ domain binding sites. Binds CTNNB1 and may thereby act as an inhibitor of the Wnt signaling pathway. Competes with LIN7A for KCNJ4 binding, and thereby promotes KCNJ4 internalization. May play a role in the Rho signaling pathway. May play a role in activation of CDC42 by the viral protein HPV16 E6.</text>
</comment>
<comment type="subunit">
    <text evidence="2 3 4 5 6 7 8 9 11">Interacts (via its PDZ domain) with GLS2. Interacts (via its PDZ domain) with RTKN (via the C-terminal region); this interaction facilitates Rho-mediated activation of the FOS serum response element (SRE). Interacts (via its PDZ domain) with CTNNB1; this interaction inhibits the transcriptional activity of CTNNB1. Interacts with HTLV-1 TAX protein. Interacts (via PDZ domain) with ARHGEF16. Interacts (via PDZ domain) with KCNJ4 (via C-terminus). Competes with LIN7A for KCNJ4 binding. Interacts with ADGRB2 (PubMed:21787750).</text>
</comment>
<comment type="interaction">
    <interactant intactId="EBI-723259">
        <id>O14907</id>
    </interactant>
    <interactant intactId="EBI-491549">
        <id>P35222</id>
        <label>CTNNB1</label>
    </interactant>
    <organismsDiffer>false</organismsDiffer>
    <experiments>4</experiments>
</comment>
<comment type="interaction">
    <interactant intactId="EBI-723259">
        <id>O14907</id>
    </interactant>
    <interactant intactId="EBI-743938">
        <id>Q96D59</id>
        <label>RNF183</label>
    </interactant>
    <organismsDiffer>false</organismsDiffer>
    <experiments>3</experiments>
</comment>
<comment type="interaction">
    <interactant intactId="EBI-723259">
        <id>O14907</id>
    </interactant>
    <interactant intactId="EBI-1177242">
        <id>P03126</id>
        <label>E6</label>
    </interactant>
    <organismsDiffer>true</organismsDiffer>
    <experiments>2</experiments>
</comment>
<comment type="subcellular location">
    <subcellularLocation>
        <location>Cytoplasm</location>
    </subcellularLocation>
    <subcellularLocation>
        <location>Nucleus</location>
    </subcellularLocation>
    <subcellularLocation>
        <location>Cell membrane</location>
        <topology>Peripheral membrane protein</topology>
        <orientation>Cytoplasmic side</orientation>
    </subcellularLocation>
    <text>Recruited to the cell membrane by interaction with membrane proteins.</text>
</comment>
<comment type="tissue specificity">
    <text evidence="2 4 10">Ubiquitous. Detected in brain, heart, kidney, lung, small intestine and skeletal muscle. Detected in various cell lines including HeLa. Weakly expressed in peripheral blood leukocytes.</text>
</comment>
<comment type="sequence caution" evidence="12">
    <conflict type="erroneous initiation">
        <sequence resource="EMBL-CDS" id="AAF43104"/>
    </conflict>
    <text>Truncated N-terminus.</text>
</comment>
<keyword id="KW-0002">3D-structure</keyword>
<keyword id="KW-0007">Acetylation</keyword>
<keyword id="KW-1003">Cell membrane</keyword>
<keyword id="KW-0963">Cytoplasm</keyword>
<keyword id="KW-0472">Membrane</keyword>
<keyword id="KW-0539">Nucleus</keyword>
<keyword id="KW-0597">Phosphoprotein</keyword>
<keyword id="KW-1267">Proteomics identification</keyword>
<keyword id="KW-1185">Reference proteome</keyword>
<keyword id="KW-0879">Wnt signaling pathway</keyword>
<dbReference type="EMBL" id="AF028823">
    <property type="protein sequence ID" value="AAB84248.2"/>
    <property type="molecule type" value="mRNA"/>
</dbReference>
<dbReference type="EMBL" id="AF168787">
    <property type="protein sequence ID" value="AAF43104.1"/>
    <property type="status" value="ALT_INIT"/>
    <property type="molecule type" value="Genomic_DNA"/>
</dbReference>
<dbReference type="EMBL" id="AF234997">
    <property type="protein sequence ID" value="AAG44368.1"/>
    <property type="molecule type" value="mRNA"/>
</dbReference>
<dbReference type="EMBL" id="AF277318">
    <property type="protein sequence ID" value="AAK69111.1"/>
    <property type="molecule type" value="mRNA"/>
</dbReference>
<dbReference type="EMBL" id="AK315408">
    <property type="protein sequence ID" value="BAG37800.1"/>
    <property type="molecule type" value="mRNA"/>
</dbReference>
<dbReference type="EMBL" id="CH471108">
    <property type="protein sequence ID" value="EAW90491.1"/>
    <property type="molecule type" value="Genomic_DNA"/>
</dbReference>
<dbReference type="EMBL" id="CH471108">
    <property type="protein sequence ID" value="EAW90492.1"/>
    <property type="molecule type" value="Genomic_DNA"/>
</dbReference>
<dbReference type="EMBL" id="BC023980">
    <property type="protein sequence ID" value="AAH23980.1"/>
    <property type="molecule type" value="mRNA"/>
</dbReference>
<dbReference type="CCDS" id="CCDS11032.1"/>
<dbReference type="RefSeq" id="NP_001191627.1">
    <property type="nucleotide sequence ID" value="NM_001204698.1"/>
</dbReference>
<dbReference type="RefSeq" id="NP_055419.1">
    <property type="nucleotide sequence ID" value="NM_014604.4"/>
</dbReference>
<dbReference type="PDB" id="2KG2">
    <property type="method" value="NMR"/>
    <property type="chains" value="A=2-124"/>
</dbReference>
<dbReference type="PDB" id="2L4S">
    <property type="method" value="NMR"/>
    <property type="chains" value="A=1-124"/>
</dbReference>
<dbReference type="PDB" id="2L4T">
    <property type="method" value="NMR"/>
    <property type="chains" value="A=1-124"/>
</dbReference>
<dbReference type="PDB" id="2VZ5">
    <property type="method" value="X-ray"/>
    <property type="resolution" value="1.74 A"/>
    <property type="chains" value="A=13-124"/>
</dbReference>
<dbReference type="PDB" id="3GJ9">
    <property type="method" value="X-ray"/>
    <property type="resolution" value="2.80 A"/>
    <property type="chains" value="A/B=1-124"/>
</dbReference>
<dbReference type="PDB" id="3SFJ">
    <property type="method" value="X-ray"/>
    <property type="resolution" value="1.24 A"/>
    <property type="chains" value="A/C=10-112"/>
</dbReference>
<dbReference type="PDB" id="4E3B">
    <property type="method" value="X-ray"/>
    <property type="resolution" value="1.50 A"/>
    <property type="chains" value="A/B=11-112"/>
</dbReference>
<dbReference type="PDB" id="4NNL">
    <property type="method" value="X-ray"/>
    <property type="resolution" value="1.50 A"/>
    <property type="chains" value="A/B=10-112"/>
</dbReference>
<dbReference type="PDB" id="4NNM">
    <property type="method" value="X-ray"/>
    <property type="resolution" value="1.60 A"/>
    <property type="chains" value="A/B=10-120"/>
</dbReference>
<dbReference type="PDBsum" id="2KG2"/>
<dbReference type="PDBsum" id="2L4S"/>
<dbReference type="PDBsum" id="2L4T"/>
<dbReference type="PDBsum" id="2VZ5"/>
<dbReference type="PDBsum" id="3GJ9"/>
<dbReference type="PDBsum" id="3SFJ"/>
<dbReference type="PDBsum" id="4E3B"/>
<dbReference type="PDBsum" id="4NNL"/>
<dbReference type="PDBsum" id="4NNM"/>
<dbReference type="BMRB" id="O14907"/>
<dbReference type="SMR" id="O14907"/>
<dbReference type="BioGRID" id="119061">
    <property type="interactions" value="66"/>
</dbReference>
<dbReference type="ELM" id="O14907"/>
<dbReference type="FunCoup" id="O14907">
    <property type="interactions" value="1611"/>
</dbReference>
<dbReference type="IntAct" id="O14907">
    <property type="interactions" value="55"/>
</dbReference>
<dbReference type="MINT" id="O14907"/>
<dbReference type="STRING" id="9606.ENSP00000225525"/>
<dbReference type="GlyGen" id="O14907">
    <property type="glycosylation" value="1 site, 1 O-linked glycan (1 site)"/>
</dbReference>
<dbReference type="iPTMnet" id="O14907"/>
<dbReference type="PhosphoSitePlus" id="O14907"/>
<dbReference type="BioMuta" id="TAX1BP3"/>
<dbReference type="jPOST" id="O14907"/>
<dbReference type="MassIVE" id="O14907"/>
<dbReference type="PaxDb" id="9606-ENSP00000225525"/>
<dbReference type="PeptideAtlas" id="O14907"/>
<dbReference type="ProteomicsDB" id="48291"/>
<dbReference type="Pumba" id="O14907"/>
<dbReference type="TopDownProteomics" id="O14907"/>
<dbReference type="ABCD" id="O14907">
    <property type="antibodies" value="1 sequenced antibody"/>
</dbReference>
<dbReference type="Antibodypedia" id="23095">
    <property type="antibodies" value="137 antibodies from 26 providers"/>
</dbReference>
<dbReference type="DNASU" id="30851"/>
<dbReference type="Ensembl" id="ENST00000225525.4">
    <property type="protein sequence ID" value="ENSP00000225525.3"/>
    <property type="gene ID" value="ENSG00000213977.8"/>
</dbReference>
<dbReference type="GeneID" id="30851"/>
<dbReference type="KEGG" id="hsa:30851"/>
<dbReference type="MANE-Select" id="ENST00000225525.4">
    <property type="protein sequence ID" value="ENSP00000225525.3"/>
    <property type="RefSeq nucleotide sequence ID" value="NM_014604.4"/>
    <property type="RefSeq protein sequence ID" value="NP_055419.1"/>
</dbReference>
<dbReference type="UCSC" id="uc002fwc.4">
    <property type="organism name" value="human"/>
</dbReference>
<dbReference type="AGR" id="HGNC:30684"/>
<dbReference type="CTD" id="30851"/>
<dbReference type="DisGeNET" id="30851"/>
<dbReference type="GeneCards" id="TAX1BP3"/>
<dbReference type="HGNC" id="HGNC:30684">
    <property type="gene designation" value="TAX1BP3"/>
</dbReference>
<dbReference type="HPA" id="ENSG00000213977">
    <property type="expression patterns" value="Low tissue specificity"/>
</dbReference>
<dbReference type="MalaCards" id="TAX1BP3"/>
<dbReference type="MIM" id="616476">
    <property type="type" value="gene"/>
</dbReference>
<dbReference type="neXtProt" id="NX_O14907"/>
<dbReference type="OpenTargets" id="ENSG00000213977"/>
<dbReference type="PharmGKB" id="PA134950693"/>
<dbReference type="VEuPathDB" id="HostDB:ENSG00000213977"/>
<dbReference type="eggNOG" id="KOG3553">
    <property type="taxonomic scope" value="Eukaryota"/>
</dbReference>
<dbReference type="GeneTree" id="ENSGT00390000002877"/>
<dbReference type="HOGENOM" id="CLU_130477_0_0_1"/>
<dbReference type="InParanoid" id="O14907"/>
<dbReference type="OMA" id="NDFTMVT"/>
<dbReference type="OrthoDB" id="10033291at2759"/>
<dbReference type="PAN-GO" id="O14907">
    <property type="GO annotations" value="3 GO annotations based on evolutionary models"/>
</dbReference>
<dbReference type="PhylomeDB" id="O14907"/>
<dbReference type="TreeFam" id="TF318964"/>
<dbReference type="BRENDA" id="3.5.1.2">
    <property type="organism ID" value="2681"/>
</dbReference>
<dbReference type="PathwayCommons" id="O14907"/>
<dbReference type="Reactome" id="R-HSA-5666185">
    <property type="pathway name" value="RHO GTPases Activate Rhotekin and Rhophilins"/>
</dbReference>
<dbReference type="SignaLink" id="O14907"/>
<dbReference type="BioGRID-ORCS" id="30851">
    <property type="hits" value="46 hits in 1162 CRISPR screens"/>
</dbReference>
<dbReference type="EvolutionaryTrace" id="O14907"/>
<dbReference type="GeneWiki" id="TAX1BP3"/>
<dbReference type="GenomeRNAi" id="30851"/>
<dbReference type="Pharos" id="O14907">
    <property type="development level" value="Tbio"/>
</dbReference>
<dbReference type="PRO" id="PR:O14907"/>
<dbReference type="Proteomes" id="UP000005640">
    <property type="component" value="Chromosome 17"/>
</dbReference>
<dbReference type="RNAct" id="O14907">
    <property type="molecule type" value="protein"/>
</dbReference>
<dbReference type="Bgee" id="ENSG00000213977">
    <property type="expression patterns" value="Expressed in tibial nerve and 94 other cell types or tissues"/>
</dbReference>
<dbReference type="ExpressionAtlas" id="O14907">
    <property type="expression patterns" value="baseline and differential"/>
</dbReference>
<dbReference type="GO" id="GO:0015629">
    <property type="term" value="C:actin cytoskeleton"/>
    <property type="evidence" value="ECO:0000314"/>
    <property type="project" value="HPA"/>
</dbReference>
<dbReference type="GO" id="GO:0005737">
    <property type="term" value="C:cytoplasm"/>
    <property type="evidence" value="ECO:0000303"/>
    <property type="project" value="UniProtKB"/>
</dbReference>
<dbReference type="GO" id="GO:0005829">
    <property type="term" value="C:cytosol"/>
    <property type="evidence" value="ECO:0000304"/>
    <property type="project" value="Reactome"/>
</dbReference>
<dbReference type="GO" id="GO:0070062">
    <property type="term" value="C:extracellular exosome"/>
    <property type="evidence" value="ECO:0007005"/>
    <property type="project" value="UniProtKB"/>
</dbReference>
<dbReference type="GO" id="GO:0001650">
    <property type="term" value="C:fibrillar center"/>
    <property type="evidence" value="ECO:0000314"/>
    <property type="project" value="HPA"/>
</dbReference>
<dbReference type="GO" id="GO:0043231">
    <property type="term" value="C:intracellular membrane-bounded organelle"/>
    <property type="evidence" value="ECO:0000314"/>
    <property type="project" value="HPA"/>
</dbReference>
<dbReference type="GO" id="GO:0005886">
    <property type="term" value="C:plasma membrane"/>
    <property type="evidence" value="ECO:0007669"/>
    <property type="project" value="UniProtKB-SubCell"/>
</dbReference>
<dbReference type="GO" id="GO:0008013">
    <property type="term" value="F:beta-catenin binding"/>
    <property type="evidence" value="ECO:0007669"/>
    <property type="project" value="Ensembl"/>
</dbReference>
<dbReference type="GO" id="GO:0008285">
    <property type="term" value="P:negative regulation of cell population proliferation"/>
    <property type="evidence" value="ECO:0007669"/>
    <property type="project" value="Ensembl"/>
</dbReference>
<dbReference type="GO" id="GO:2000009">
    <property type="term" value="P:negative regulation of protein localization to cell surface"/>
    <property type="evidence" value="ECO:0000314"/>
    <property type="project" value="UniProtKB"/>
</dbReference>
<dbReference type="GO" id="GO:0030178">
    <property type="term" value="P:negative regulation of Wnt signaling pathway"/>
    <property type="evidence" value="ECO:0000250"/>
    <property type="project" value="UniProtKB"/>
</dbReference>
<dbReference type="GO" id="GO:0032489">
    <property type="term" value="P:regulation of Cdc42 protein signal transduction"/>
    <property type="evidence" value="ECO:0000314"/>
    <property type="project" value="BHF-UCL"/>
</dbReference>
<dbReference type="GO" id="GO:0007266">
    <property type="term" value="P:Rho protein signal transduction"/>
    <property type="evidence" value="ECO:0000314"/>
    <property type="project" value="UniProtKB"/>
</dbReference>
<dbReference type="GO" id="GO:0016055">
    <property type="term" value="P:Wnt signaling pathway"/>
    <property type="evidence" value="ECO:0007669"/>
    <property type="project" value="UniProtKB-KW"/>
</dbReference>
<dbReference type="CDD" id="cd10822">
    <property type="entry name" value="PDZ_TAX1BP3-like"/>
    <property type="match status" value="1"/>
</dbReference>
<dbReference type="FunFam" id="2.30.42.10:FF:000121">
    <property type="entry name" value="Tax1-binding protein 3"/>
    <property type="match status" value="1"/>
</dbReference>
<dbReference type="Gene3D" id="2.30.42.10">
    <property type="match status" value="1"/>
</dbReference>
<dbReference type="InterPro" id="IPR001478">
    <property type="entry name" value="PDZ"/>
</dbReference>
<dbReference type="InterPro" id="IPR036034">
    <property type="entry name" value="PDZ_sf"/>
</dbReference>
<dbReference type="InterPro" id="IPR050614">
    <property type="entry name" value="Synaptic_Scaffolding_LAP-MAGUK"/>
</dbReference>
<dbReference type="InterPro" id="IPR017268">
    <property type="entry name" value="Tax1-binding_p3"/>
</dbReference>
<dbReference type="PANTHER" id="PTHR23119">
    <property type="entry name" value="DISCS LARGE"/>
    <property type="match status" value="1"/>
</dbReference>
<dbReference type="PANTHER" id="PTHR23119:SF50">
    <property type="entry name" value="PDZ DOMAIN-CONTAINING PROTEIN"/>
    <property type="match status" value="1"/>
</dbReference>
<dbReference type="Pfam" id="PF00595">
    <property type="entry name" value="PDZ"/>
    <property type="match status" value="1"/>
</dbReference>
<dbReference type="PIRSF" id="PIRSF037712">
    <property type="entry name" value="Tax1-binding_p3"/>
    <property type="match status" value="1"/>
</dbReference>
<dbReference type="SMART" id="SM00228">
    <property type="entry name" value="PDZ"/>
    <property type="match status" value="1"/>
</dbReference>
<dbReference type="SUPFAM" id="SSF50156">
    <property type="entry name" value="PDZ domain-like"/>
    <property type="match status" value="1"/>
</dbReference>
<dbReference type="PROSITE" id="PS50106">
    <property type="entry name" value="PDZ"/>
    <property type="match status" value="1"/>
</dbReference>
<accession>O14907</accession>
<accession>B2RD53</accession>
<accession>D3DTJ6</accession>
<accession>Q7LCQ4</accession>
<evidence type="ECO:0000255" key="1">
    <source>
        <dbReference type="PROSITE-ProRule" id="PRU00143"/>
    </source>
</evidence>
<evidence type="ECO:0000269" key="2">
    <source>
    </source>
</evidence>
<evidence type="ECO:0000269" key="3">
    <source>
    </source>
</evidence>
<evidence type="ECO:0000269" key="4">
    <source>
    </source>
</evidence>
<evidence type="ECO:0000269" key="5">
    <source>
    </source>
</evidence>
<evidence type="ECO:0000269" key="6">
    <source>
    </source>
</evidence>
<evidence type="ECO:0000269" key="7">
    <source>
    </source>
</evidence>
<evidence type="ECO:0000269" key="8">
    <source>
    </source>
</evidence>
<evidence type="ECO:0000269" key="9">
    <source>
    </source>
</evidence>
<evidence type="ECO:0000269" key="10">
    <source>
    </source>
</evidence>
<evidence type="ECO:0000269" key="11">
    <source>
    </source>
</evidence>
<evidence type="ECO:0000305" key="12"/>
<evidence type="ECO:0000312" key="13">
    <source>
        <dbReference type="EMBL" id="AAB84248.2"/>
    </source>
</evidence>
<evidence type="ECO:0000312" key="14">
    <source>
        <dbReference type="EMBL" id="AAF43104.1"/>
    </source>
</evidence>
<evidence type="ECO:0000312" key="15">
    <source>
        <dbReference type="EMBL" id="AAG44368.1"/>
    </source>
</evidence>
<evidence type="ECO:0000312" key="16">
    <source>
        <dbReference type="EMBL" id="AAH23980.1"/>
    </source>
</evidence>
<evidence type="ECO:0000312" key="17">
    <source>
        <dbReference type="EMBL" id="AAK69111.1"/>
    </source>
</evidence>
<evidence type="ECO:0000312" key="18">
    <source>
        <dbReference type="HGNC" id="HGNC:30684"/>
    </source>
</evidence>
<evidence type="ECO:0007744" key="19">
    <source>
    </source>
</evidence>
<evidence type="ECO:0007744" key="20">
    <source>
    </source>
</evidence>
<evidence type="ECO:0007744" key="21">
    <source>
    </source>
</evidence>
<evidence type="ECO:0007744" key="22">
    <source>
    </source>
</evidence>
<evidence type="ECO:0007829" key="23">
    <source>
        <dbReference type="PDB" id="2KG2"/>
    </source>
</evidence>
<evidence type="ECO:0007829" key="24">
    <source>
        <dbReference type="PDB" id="2L4S"/>
    </source>
</evidence>
<evidence type="ECO:0007829" key="25">
    <source>
        <dbReference type="PDB" id="2L4T"/>
    </source>
</evidence>
<evidence type="ECO:0007829" key="26">
    <source>
        <dbReference type="PDB" id="3SFJ"/>
    </source>
</evidence>
<sequence length="124" mass="13735">MSYIPGQPVTAVVQRVEIHKLRQGENLILGFSIGGGIDQDPSQNPFSEDKTDKGIYVTRVSEGGPAEIAGLQIGDKIMQVNGWDMTMVTHDQARKRLTKRSEEVVRLLVTRQSLQKAVQQSMLS</sequence>
<proteinExistence type="evidence at protein level"/>
<name>TX1B3_HUMAN</name>